<evidence type="ECO:0000255" key="1">
    <source>
        <dbReference type="HAMAP-Rule" id="MF_00563"/>
    </source>
</evidence>
<feature type="chain" id="PRO_1000129289" description="Adenosylhomocysteinase">
    <location>
        <begin position="1"/>
        <end position="468"/>
    </location>
</feature>
<feature type="binding site" evidence="1">
    <location>
        <position position="57"/>
    </location>
    <ligand>
        <name>substrate</name>
    </ligand>
</feature>
<feature type="binding site" evidence="1">
    <location>
        <position position="132"/>
    </location>
    <ligand>
        <name>substrate</name>
    </ligand>
</feature>
<feature type="binding site" evidence="1">
    <location>
        <position position="194"/>
    </location>
    <ligand>
        <name>substrate</name>
    </ligand>
</feature>
<feature type="binding site" evidence="1">
    <location>
        <begin position="195"/>
        <end position="197"/>
    </location>
    <ligand>
        <name>NAD(+)</name>
        <dbReference type="ChEBI" id="CHEBI:57540"/>
    </ligand>
</feature>
<feature type="binding site" evidence="1">
    <location>
        <position position="224"/>
    </location>
    <ligand>
        <name>substrate</name>
    </ligand>
</feature>
<feature type="binding site" evidence="1">
    <location>
        <position position="228"/>
    </location>
    <ligand>
        <name>substrate</name>
    </ligand>
</feature>
<feature type="binding site" evidence="1">
    <location>
        <position position="229"/>
    </location>
    <ligand>
        <name>NAD(+)</name>
        <dbReference type="ChEBI" id="CHEBI:57540"/>
    </ligand>
</feature>
<feature type="binding site" evidence="1">
    <location>
        <begin position="258"/>
        <end position="263"/>
    </location>
    <ligand>
        <name>NAD(+)</name>
        <dbReference type="ChEBI" id="CHEBI:57540"/>
    </ligand>
</feature>
<feature type="binding site" evidence="1">
    <location>
        <position position="281"/>
    </location>
    <ligand>
        <name>NAD(+)</name>
        <dbReference type="ChEBI" id="CHEBI:57540"/>
    </ligand>
</feature>
<feature type="binding site" evidence="1">
    <location>
        <position position="316"/>
    </location>
    <ligand>
        <name>NAD(+)</name>
        <dbReference type="ChEBI" id="CHEBI:57540"/>
    </ligand>
</feature>
<feature type="binding site" evidence="1">
    <location>
        <begin position="337"/>
        <end position="339"/>
    </location>
    <ligand>
        <name>NAD(+)</name>
        <dbReference type="ChEBI" id="CHEBI:57540"/>
    </ligand>
</feature>
<feature type="binding site" evidence="1">
    <location>
        <position position="382"/>
    </location>
    <ligand>
        <name>NAD(+)</name>
        <dbReference type="ChEBI" id="CHEBI:57540"/>
    </ligand>
</feature>
<gene>
    <name evidence="1" type="primary">ahcY</name>
    <name type="ordered locus">M446_0499</name>
</gene>
<dbReference type="EC" id="3.13.2.1" evidence="1"/>
<dbReference type="EMBL" id="CP000943">
    <property type="protein sequence ID" value="ACA15062.1"/>
    <property type="molecule type" value="Genomic_DNA"/>
</dbReference>
<dbReference type="RefSeq" id="WP_012330479.1">
    <property type="nucleotide sequence ID" value="NC_010511.1"/>
</dbReference>
<dbReference type="SMR" id="B0UM37"/>
<dbReference type="STRING" id="426117.M446_0499"/>
<dbReference type="KEGG" id="met:M446_0499"/>
<dbReference type="eggNOG" id="COG0499">
    <property type="taxonomic scope" value="Bacteria"/>
</dbReference>
<dbReference type="HOGENOM" id="CLU_025194_2_1_5"/>
<dbReference type="UniPathway" id="UPA00314">
    <property type="reaction ID" value="UER00076"/>
</dbReference>
<dbReference type="GO" id="GO:0005829">
    <property type="term" value="C:cytosol"/>
    <property type="evidence" value="ECO:0007669"/>
    <property type="project" value="TreeGrafter"/>
</dbReference>
<dbReference type="GO" id="GO:0004013">
    <property type="term" value="F:adenosylhomocysteinase activity"/>
    <property type="evidence" value="ECO:0007669"/>
    <property type="project" value="UniProtKB-UniRule"/>
</dbReference>
<dbReference type="GO" id="GO:0071269">
    <property type="term" value="P:L-homocysteine biosynthetic process"/>
    <property type="evidence" value="ECO:0007669"/>
    <property type="project" value="UniProtKB-UniRule"/>
</dbReference>
<dbReference type="GO" id="GO:0006730">
    <property type="term" value="P:one-carbon metabolic process"/>
    <property type="evidence" value="ECO:0007669"/>
    <property type="project" value="UniProtKB-KW"/>
</dbReference>
<dbReference type="GO" id="GO:0033353">
    <property type="term" value="P:S-adenosylmethionine cycle"/>
    <property type="evidence" value="ECO:0007669"/>
    <property type="project" value="TreeGrafter"/>
</dbReference>
<dbReference type="CDD" id="cd00401">
    <property type="entry name" value="SAHH"/>
    <property type="match status" value="1"/>
</dbReference>
<dbReference type="FunFam" id="3.40.50.720:FF:000004">
    <property type="entry name" value="Adenosylhomocysteinase"/>
    <property type="match status" value="1"/>
</dbReference>
<dbReference type="Gene3D" id="3.40.50.1480">
    <property type="entry name" value="Adenosylhomocysteinase-like"/>
    <property type="match status" value="1"/>
</dbReference>
<dbReference type="Gene3D" id="3.40.50.720">
    <property type="entry name" value="NAD(P)-binding Rossmann-like Domain"/>
    <property type="match status" value="1"/>
</dbReference>
<dbReference type="HAMAP" id="MF_00563">
    <property type="entry name" value="AdoHcyase"/>
    <property type="match status" value="1"/>
</dbReference>
<dbReference type="InterPro" id="IPR042172">
    <property type="entry name" value="Adenosylhomocyst_ase-like_sf"/>
</dbReference>
<dbReference type="InterPro" id="IPR000043">
    <property type="entry name" value="Adenosylhomocysteinase-like"/>
</dbReference>
<dbReference type="InterPro" id="IPR015878">
    <property type="entry name" value="Ado_hCys_hydrolase_NAD-bd"/>
</dbReference>
<dbReference type="InterPro" id="IPR036291">
    <property type="entry name" value="NAD(P)-bd_dom_sf"/>
</dbReference>
<dbReference type="InterPro" id="IPR020082">
    <property type="entry name" value="S-Ado-L-homoCys_hydrolase_CS"/>
</dbReference>
<dbReference type="NCBIfam" id="TIGR00936">
    <property type="entry name" value="ahcY"/>
    <property type="match status" value="1"/>
</dbReference>
<dbReference type="NCBIfam" id="NF004005">
    <property type="entry name" value="PRK05476.2-3"/>
    <property type="match status" value="1"/>
</dbReference>
<dbReference type="PANTHER" id="PTHR23420">
    <property type="entry name" value="ADENOSYLHOMOCYSTEINASE"/>
    <property type="match status" value="1"/>
</dbReference>
<dbReference type="PANTHER" id="PTHR23420:SF0">
    <property type="entry name" value="ADENOSYLHOMOCYSTEINASE"/>
    <property type="match status" value="1"/>
</dbReference>
<dbReference type="Pfam" id="PF05221">
    <property type="entry name" value="AdoHcyase"/>
    <property type="match status" value="1"/>
</dbReference>
<dbReference type="Pfam" id="PF00670">
    <property type="entry name" value="AdoHcyase_NAD"/>
    <property type="match status" value="1"/>
</dbReference>
<dbReference type="PIRSF" id="PIRSF001109">
    <property type="entry name" value="Ad_hcy_hydrolase"/>
    <property type="match status" value="1"/>
</dbReference>
<dbReference type="SMART" id="SM00996">
    <property type="entry name" value="AdoHcyase"/>
    <property type="match status" value="1"/>
</dbReference>
<dbReference type="SMART" id="SM00997">
    <property type="entry name" value="AdoHcyase_NAD"/>
    <property type="match status" value="1"/>
</dbReference>
<dbReference type="SUPFAM" id="SSF52283">
    <property type="entry name" value="Formate/glycerate dehydrogenase catalytic domain-like"/>
    <property type="match status" value="1"/>
</dbReference>
<dbReference type="SUPFAM" id="SSF51735">
    <property type="entry name" value="NAD(P)-binding Rossmann-fold domains"/>
    <property type="match status" value="1"/>
</dbReference>
<dbReference type="PROSITE" id="PS00738">
    <property type="entry name" value="ADOHCYASE_1"/>
    <property type="match status" value="1"/>
</dbReference>
<dbReference type="PROSITE" id="PS00739">
    <property type="entry name" value="ADOHCYASE_2"/>
    <property type="match status" value="1"/>
</dbReference>
<reference key="1">
    <citation type="submission" date="2008-02" db="EMBL/GenBank/DDBJ databases">
        <title>Complete sequence of chromosome of Methylobacterium sp. 4-46.</title>
        <authorList>
            <consortium name="US DOE Joint Genome Institute"/>
            <person name="Copeland A."/>
            <person name="Lucas S."/>
            <person name="Lapidus A."/>
            <person name="Glavina del Rio T."/>
            <person name="Dalin E."/>
            <person name="Tice H."/>
            <person name="Bruce D."/>
            <person name="Goodwin L."/>
            <person name="Pitluck S."/>
            <person name="Chertkov O."/>
            <person name="Brettin T."/>
            <person name="Detter J.C."/>
            <person name="Han C."/>
            <person name="Kuske C.R."/>
            <person name="Schmutz J."/>
            <person name="Larimer F."/>
            <person name="Land M."/>
            <person name="Hauser L."/>
            <person name="Kyrpides N."/>
            <person name="Ivanova N."/>
            <person name="Marx C.J."/>
            <person name="Richardson P."/>
        </authorList>
    </citation>
    <scope>NUCLEOTIDE SEQUENCE [LARGE SCALE GENOMIC DNA]</scope>
    <source>
        <strain>4-46</strain>
    </source>
</reference>
<keyword id="KW-0963">Cytoplasm</keyword>
<keyword id="KW-0378">Hydrolase</keyword>
<keyword id="KW-0520">NAD</keyword>
<keyword id="KW-0554">One-carbon metabolism</keyword>
<accession>B0UM37</accession>
<proteinExistence type="inferred from homology"/>
<sequence>MPSNQDYIVRDIGLADFGRKEIAIAETEMPGLMAVRAEYAASQPLKGAKIAGSLHMTIQTAVLIETLKALGADIRWVSCNIYSTQDHAAAAIAAAGIPVFAVKGETLTEYWDYTARLFDWHDGGMPNMILDDGGDATMFVHAGLRAERGDTAFLDAPGSEEEEIFFALIKRMLKEKPKGWFAGLAESIKGVSEETTTGVHRLYILAKEGKLLFPAINVNDSVTKSKFDNLYGCRESLVDGIRRGTDVMMAGKVAMVAGFGDVGKGSAASLRNAGCRVMVSEVDPICALQAAMEGYEVTTMEDAAPRADIFVTATGNKDVITIDHMRSMKDRAIVCNIGHFDNEIQVAGLKNLKWSNIKPQVDEIEFPDGHRIILLSEGRLVNLGNAMGHPSFVMSASFTNQTLAQIELWTNQGKYENQVYTLPKTLDEKVAALHLEKIGVKLTTLRPDQAAYIGVQASGPFKPDHYRY</sequence>
<name>SAHH_METS4</name>
<comment type="function">
    <text evidence="1">May play a key role in the regulation of the intracellular concentration of adenosylhomocysteine.</text>
</comment>
<comment type="catalytic activity">
    <reaction evidence="1">
        <text>S-adenosyl-L-homocysteine + H2O = L-homocysteine + adenosine</text>
        <dbReference type="Rhea" id="RHEA:21708"/>
        <dbReference type="ChEBI" id="CHEBI:15377"/>
        <dbReference type="ChEBI" id="CHEBI:16335"/>
        <dbReference type="ChEBI" id="CHEBI:57856"/>
        <dbReference type="ChEBI" id="CHEBI:58199"/>
        <dbReference type="EC" id="3.13.2.1"/>
    </reaction>
</comment>
<comment type="cofactor">
    <cofactor evidence="1">
        <name>NAD(+)</name>
        <dbReference type="ChEBI" id="CHEBI:57540"/>
    </cofactor>
    <text evidence="1">Binds 1 NAD(+) per subunit.</text>
</comment>
<comment type="pathway">
    <text evidence="1">Amino-acid biosynthesis; L-homocysteine biosynthesis; L-homocysteine from S-adenosyl-L-homocysteine: step 1/1.</text>
</comment>
<comment type="subcellular location">
    <subcellularLocation>
        <location evidence="1">Cytoplasm</location>
    </subcellularLocation>
</comment>
<comment type="similarity">
    <text evidence="1">Belongs to the adenosylhomocysteinase family.</text>
</comment>
<protein>
    <recommendedName>
        <fullName evidence="1">Adenosylhomocysteinase</fullName>
        <ecNumber evidence="1">3.13.2.1</ecNumber>
    </recommendedName>
    <alternativeName>
        <fullName evidence="1">S-adenosyl-L-homocysteine hydrolase</fullName>
        <shortName evidence="1">AdoHcyase</shortName>
    </alternativeName>
</protein>
<organism>
    <name type="scientific">Methylobacterium sp. (strain 4-46)</name>
    <dbReference type="NCBI Taxonomy" id="426117"/>
    <lineage>
        <taxon>Bacteria</taxon>
        <taxon>Pseudomonadati</taxon>
        <taxon>Pseudomonadota</taxon>
        <taxon>Alphaproteobacteria</taxon>
        <taxon>Hyphomicrobiales</taxon>
        <taxon>Methylobacteriaceae</taxon>
        <taxon>Methylobacterium</taxon>
    </lineage>
</organism>